<keyword id="KW-0521">NADP</keyword>
<keyword id="KW-0560">Oxidoreductase</keyword>
<evidence type="ECO:0000250" key="1"/>
<evidence type="ECO:0000250" key="2">
    <source>
        <dbReference type="UniProtKB" id="P39831"/>
    </source>
</evidence>
<evidence type="ECO:0000250" key="3">
    <source>
        <dbReference type="UniProtKB" id="Q05016"/>
    </source>
</evidence>
<evidence type="ECO:0000255" key="4">
    <source>
        <dbReference type="PROSITE-ProRule" id="PRU10001"/>
    </source>
</evidence>
<evidence type="ECO:0000305" key="5"/>
<protein>
    <recommendedName>
        <fullName evidence="2">NADP-dependent 3-hydroxy acid dehydrogenase YdfG</fullName>
    </recommendedName>
    <alternativeName>
        <fullName evidence="2">L-allo-threonine dehydrogenase</fullName>
        <ecNumber evidence="2">1.1.1.381</ecNumber>
    </alternativeName>
    <alternativeName>
        <fullName evidence="2">Malonic semialdehyde reductase</fullName>
        <ecNumber evidence="2">1.1.1.298</ecNumber>
    </alternativeName>
</protein>
<accession>P69935</accession>
<accession>P40864</accession>
<feature type="chain" id="PRO_0000054828" description="NADP-dependent 3-hydroxy acid dehydrogenase YdfG">
    <location>
        <begin position="1"/>
        <end position="248"/>
    </location>
</feature>
<feature type="active site" description="Proton acceptor" evidence="4">
    <location>
        <position position="147"/>
    </location>
</feature>
<feature type="binding site" evidence="3">
    <location>
        <begin position="7"/>
        <end position="12"/>
    </location>
    <ligand>
        <name>NADP(+)</name>
        <dbReference type="ChEBI" id="CHEBI:58349"/>
    </ligand>
</feature>
<feature type="binding site" evidence="3">
    <location>
        <begin position="32"/>
        <end position="33"/>
    </location>
    <ligand>
        <name>NADP(+)</name>
        <dbReference type="ChEBI" id="CHEBI:58349"/>
    </ligand>
</feature>
<feature type="binding site" evidence="3">
    <location>
        <begin position="54"/>
        <end position="55"/>
    </location>
    <ligand>
        <name>NADP(+)</name>
        <dbReference type="ChEBI" id="CHEBI:58349"/>
    </ligand>
</feature>
<feature type="binding site" evidence="3">
    <location>
        <position position="81"/>
    </location>
    <ligand>
        <name>NADP(+)</name>
        <dbReference type="ChEBI" id="CHEBI:58349"/>
    </ligand>
</feature>
<feature type="binding site" evidence="1">
    <location>
        <position position="134"/>
    </location>
    <ligand>
        <name>substrate</name>
    </ligand>
</feature>
<feature type="binding site" evidence="3">
    <location>
        <position position="147"/>
    </location>
    <ligand>
        <name>NADP(+)</name>
        <dbReference type="ChEBI" id="CHEBI:58349"/>
    </ligand>
</feature>
<feature type="binding site" evidence="3">
    <location>
        <position position="151"/>
    </location>
    <ligand>
        <name>NADP(+)</name>
        <dbReference type="ChEBI" id="CHEBI:58349"/>
    </ligand>
</feature>
<feature type="binding site" evidence="3">
    <location>
        <begin position="177"/>
        <end position="185"/>
    </location>
    <ligand>
        <name>NADP(+)</name>
        <dbReference type="ChEBI" id="CHEBI:58349"/>
    </ligand>
</feature>
<reference key="1">
    <citation type="journal article" date="2001" name="Nature">
        <title>Complete genome sequence of a multiple drug resistant Salmonella enterica serovar Typhi CT18.</title>
        <authorList>
            <person name="Parkhill J."/>
            <person name="Dougan G."/>
            <person name="James K.D."/>
            <person name="Thomson N.R."/>
            <person name="Pickard D."/>
            <person name="Wain J."/>
            <person name="Churcher C.M."/>
            <person name="Mungall K.L."/>
            <person name="Bentley S.D."/>
            <person name="Holden M.T.G."/>
            <person name="Sebaihia M."/>
            <person name="Baker S."/>
            <person name="Basham D."/>
            <person name="Brooks K."/>
            <person name="Chillingworth T."/>
            <person name="Connerton P."/>
            <person name="Cronin A."/>
            <person name="Davis P."/>
            <person name="Davies R.M."/>
            <person name="Dowd L."/>
            <person name="White N."/>
            <person name="Farrar J."/>
            <person name="Feltwell T."/>
            <person name="Hamlin N."/>
            <person name="Haque A."/>
            <person name="Hien T.T."/>
            <person name="Holroyd S."/>
            <person name="Jagels K."/>
            <person name="Krogh A."/>
            <person name="Larsen T.S."/>
            <person name="Leather S."/>
            <person name="Moule S."/>
            <person name="O'Gaora P."/>
            <person name="Parry C."/>
            <person name="Quail M.A."/>
            <person name="Rutherford K.M."/>
            <person name="Simmonds M."/>
            <person name="Skelton J."/>
            <person name="Stevens K."/>
            <person name="Whitehead S."/>
            <person name="Barrell B.G."/>
        </authorList>
    </citation>
    <scope>NUCLEOTIDE SEQUENCE [LARGE SCALE GENOMIC DNA]</scope>
    <source>
        <strain>CT18</strain>
    </source>
</reference>
<reference key="2">
    <citation type="journal article" date="2003" name="J. Bacteriol.">
        <title>Comparative genomics of Salmonella enterica serovar Typhi strains Ty2 and CT18.</title>
        <authorList>
            <person name="Deng W."/>
            <person name="Liou S.-R."/>
            <person name="Plunkett G. III"/>
            <person name="Mayhew G.F."/>
            <person name="Rose D.J."/>
            <person name="Burland V."/>
            <person name="Kodoyianni V."/>
            <person name="Schwartz D.C."/>
            <person name="Blattner F.R."/>
        </authorList>
    </citation>
    <scope>NUCLEOTIDE SEQUENCE [LARGE SCALE GENOMIC DNA]</scope>
    <source>
        <strain>ATCC 700931 / Ty2</strain>
    </source>
</reference>
<gene>
    <name evidence="2" type="primary">ydfG</name>
    <name type="ordered locus">STY1550</name>
    <name type="ordered locus">t1432</name>
</gene>
<comment type="function">
    <text evidence="2">NADP-dependent dehydrogenase with broad substrate specificity acting on 3-hydroxy acids. Catalyzes the NADP-dependent oxidation of L-allo-threonine to L-2-amino-3-keto-butyrate, which is spontaneously decarboxylated into aminoacetone. Also acts on D-threonine, L-serine, D-serine, D-3-hydroxyisobutyrate, L-3-hydroxyisobutyrate, D-glycerate and L-glycerate. Able to catalyze the reduction of the malonic semialdehyde to 3-hydroxypropionic acid. YdfG is apparently supplementing RutE, the presumed malonic semialdehyde reductase involved in pyrimidine degradation since both are able to detoxify malonic semialdehyde.</text>
</comment>
<comment type="catalytic activity">
    <reaction evidence="2">
        <text>3-hydroxypropanoate + NADP(+) = 3-oxopropanoate + NADPH + H(+)</text>
        <dbReference type="Rhea" id="RHEA:26438"/>
        <dbReference type="ChEBI" id="CHEBI:15378"/>
        <dbReference type="ChEBI" id="CHEBI:16510"/>
        <dbReference type="ChEBI" id="CHEBI:33190"/>
        <dbReference type="ChEBI" id="CHEBI:57783"/>
        <dbReference type="ChEBI" id="CHEBI:58349"/>
        <dbReference type="EC" id="1.1.1.298"/>
    </reaction>
</comment>
<comment type="catalytic activity">
    <reaction evidence="2">
        <text>L-allo-threonine + NADP(+) = aminoacetone + CO2 + NADPH</text>
        <dbReference type="Rhea" id="RHEA:43524"/>
        <dbReference type="ChEBI" id="CHEBI:16526"/>
        <dbReference type="ChEBI" id="CHEBI:57783"/>
        <dbReference type="ChEBI" id="CHEBI:58320"/>
        <dbReference type="ChEBI" id="CHEBI:58349"/>
        <dbReference type="ChEBI" id="CHEBI:58585"/>
        <dbReference type="EC" id="1.1.1.381"/>
    </reaction>
</comment>
<comment type="subunit">
    <text evidence="2">Homotetramer.</text>
</comment>
<comment type="similarity">
    <text evidence="5">Belongs to the short-chain dehydrogenases/reductases (SDR) family.</text>
</comment>
<name>YDFG_SALTI</name>
<proteinExistence type="inferred from homology"/>
<sequence length="248" mass="27043">MIVLVTGATAGFGECIARRFVENGHKVIATGRRHERLQALKDELGENVLTAQLDVRNRAAIEEMMASLPAQWRDIDVLVNNAGLALGLEPAHKASVEDWETMIDTNNKGLIYMTRAVLPGMVERNRGHIINIGSTAGSWPYAGGNVYGATKAFVRQFSLNLRTDLHGTAVRVTDIEPGLVGGTEFSSVRFKGDDEKAGKTYENTTALTPEDITEAVWWVATLPAHVNINTVEMMPVTQSFAGLSVHRS</sequence>
<organism>
    <name type="scientific">Salmonella typhi</name>
    <dbReference type="NCBI Taxonomy" id="90370"/>
    <lineage>
        <taxon>Bacteria</taxon>
        <taxon>Pseudomonadati</taxon>
        <taxon>Pseudomonadota</taxon>
        <taxon>Gammaproteobacteria</taxon>
        <taxon>Enterobacterales</taxon>
        <taxon>Enterobacteriaceae</taxon>
        <taxon>Salmonella</taxon>
    </lineage>
</organism>
<dbReference type="EC" id="1.1.1.381" evidence="2"/>
<dbReference type="EC" id="1.1.1.298" evidence="2"/>
<dbReference type="EMBL" id="AL513382">
    <property type="protein sequence ID" value="CAD01802.1"/>
    <property type="molecule type" value="Genomic_DNA"/>
</dbReference>
<dbReference type="EMBL" id="AE014613">
    <property type="protein sequence ID" value="AAO69074.1"/>
    <property type="molecule type" value="Genomic_DNA"/>
</dbReference>
<dbReference type="RefSeq" id="NP_455969.1">
    <property type="nucleotide sequence ID" value="NC_003198.1"/>
</dbReference>
<dbReference type="RefSeq" id="WP_000636564.1">
    <property type="nucleotide sequence ID" value="NZ_WSUR01000006.1"/>
</dbReference>
<dbReference type="SMR" id="P69935"/>
<dbReference type="STRING" id="220341.gene:17585492"/>
<dbReference type="KEGG" id="stt:t1432"/>
<dbReference type="KEGG" id="sty:STY1550"/>
<dbReference type="PATRIC" id="fig|220341.7.peg.1559"/>
<dbReference type="eggNOG" id="COG4221">
    <property type="taxonomic scope" value="Bacteria"/>
</dbReference>
<dbReference type="HOGENOM" id="CLU_010194_2_10_6"/>
<dbReference type="OMA" id="WRWMWET"/>
<dbReference type="OrthoDB" id="9810734at2"/>
<dbReference type="Proteomes" id="UP000000541">
    <property type="component" value="Chromosome"/>
</dbReference>
<dbReference type="Proteomes" id="UP000002670">
    <property type="component" value="Chromosome"/>
</dbReference>
<dbReference type="GO" id="GO:0005829">
    <property type="term" value="C:cytosol"/>
    <property type="evidence" value="ECO:0007669"/>
    <property type="project" value="TreeGrafter"/>
</dbReference>
<dbReference type="GO" id="GO:0035527">
    <property type="term" value="F:3-hydroxypropionate dehydrogenase (NADP+) activity"/>
    <property type="evidence" value="ECO:0007669"/>
    <property type="project" value="UniProtKB-EC"/>
</dbReference>
<dbReference type="CDD" id="cd05346">
    <property type="entry name" value="SDR_c5"/>
    <property type="match status" value="1"/>
</dbReference>
<dbReference type="FunFam" id="3.40.50.720:FF:000047">
    <property type="entry name" value="NADP-dependent L-serine/L-allo-threonine dehydrogenase"/>
    <property type="match status" value="1"/>
</dbReference>
<dbReference type="Gene3D" id="3.40.50.720">
    <property type="entry name" value="NAD(P)-binding Rossmann-like Domain"/>
    <property type="match status" value="1"/>
</dbReference>
<dbReference type="InterPro" id="IPR036291">
    <property type="entry name" value="NAD(P)-bd_dom_sf"/>
</dbReference>
<dbReference type="InterPro" id="IPR020904">
    <property type="entry name" value="Sc_DH/Rdtase_CS"/>
</dbReference>
<dbReference type="InterPro" id="IPR002347">
    <property type="entry name" value="SDR_fam"/>
</dbReference>
<dbReference type="NCBIfam" id="NF007829">
    <property type="entry name" value="PRK10538.1"/>
    <property type="match status" value="1"/>
</dbReference>
<dbReference type="PANTHER" id="PTHR43086:SF3">
    <property type="entry name" value="NADP-DEPENDENT 3-HYDROXY ACID DEHYDROGENASE YDFG"/>
    <property type="match status" value="1"/>
</dbReference>
<dbReference type="PANTHER" id="PTHR43086">
    <property type="entry name" value="VERY-LONG-CHAIN 3-OXOOACYL-COA REDUCTASE"/>
    <property type="match status" value="1"/>
</dbReference>
<dbReference type="Pfam" id="PF00106">
    <property type="entry name" value="adh_short"/>
    <property type="match status" value="1"/>
</dbReference>
<dbReference type="PRINTS" id="PR00081">
    <property type="entry name" value="GDHRDH"/>
</dbReference>
<dbReference type="PRINTS" id="PR00080">
    <property type="entry name" value="SDRFAMILY"/>
</dbReference>
<dbReference type="SUPFAM" id="SSF51735">
    <property type="entry name" value="NAD(P)-binding Rossmann-fold domains"/>
    <property type="match status" value="1"/>
</dbReference>
<dbReference type="PROSITE" id="PS00061">
    <property type="entry name" value="ADH_SHORT"/>
    <property type="match status" value="1"/>
</dbReference>